<dbReference type="EMBL" id="CP001279">
    <property type="protein sequence ID" value="ACM92919.1"/>
    <property type="molecule type" value="Genomic_DNA"/>
</dbReference>
<dbReference type="RefSeq" id="WP_015901971.1">
    <property type="nucleotide sequence ID" value="NC_012115.1"/>
</dbReference>
<dbReference type="SMR" id="B9L7J2"/>
<dbReference type="STRING" id="598659.NAMH_0176"/>
<dbReference type="KEGG" id="nam:NAMH_0176"/>
<dbReference type="eggNOG" id="COG0080">
    <property type="taxonomic scope" value="Bacteria"/>
</dbReference>
<dbReference type="HOGENOM" id="CLU_074237_2_0_7"/>
<dbReference type="OrthoDB" id="9802408at2"/>
<dbReference type="Proteomes" id="UP000000448">
    <property type="component" value="Chromosome"/>
</dbReference>
<dbReference type="GO" id="GO:0022625">
    <property type="term" value="C:cytosolic large ribosomal subunit"/>
    <property type="evidence" value="ECO:0007669"/>
    <property type="project" value="TreeGrafter"/>
</dbReference>
<dbReference type="GO" id="GO:0070180">
    <property type="term" value="F:large ribosomal subunit rRNA binding"/>
    <property type="evidence" value="ECO:0007669"/>
    <property type="project" value="UniProtKB-UniRule"/>
</dbReference>
<dbReference type="GO" id="GO:0003735">
    <property type="term" value="F:structural constituent of ribosome"/>
    <property type="evidence" value="ECO:0007669"/>
    <property type="project" value="InterPro"/>
</dbReference>
<dbReference type="GO" id="GO:0006412">
    <property type="term" value="P:translation"/>
    <property type="evidence" value="ECO:0007669"/>
    <property type="project" value="UniProtKB-UniRule"/>
</dbReference>
<dbReference type="CDD" id="cd00349">
    <property type="entry name" value="Ribosomal_L11"/>
    <property type="match status" value="1"/>
</dbReference>
<dbReference type="FunFam" id="1.10.10.250:FF:000001">
    <property type="entry name" value="50S ribosomal protein L11"/>
    <property type="match status" value="1"/>
</dbReference>
<dbReference type="FunFam" id="3.30.1550.10:FF:000001">
    <property type="entry name" value="50S ribosomal protein L11"/>
    <property type="match status" value="1"/>
</dbReference>
<dbReference type="Gene3D" id="1.10.10.250">
    <property type="entry name" value="Ribosomal protein L11, C-terminal domain"/>
    <property type="match status" value="1"/>
</dbReference>
<dbReference type="Gene3D" id="3.30.1550.10">
    <property type="entry name" value="Ribosomal protein L11/L12, N-terminal domain"/>
    <property type="match status" value="1"/>
</dbReference>
<dbReference type="HAMAP" id="MF_00736">
    <property type="entry name" value="Ribosomal_uL11"/>
    <property type="match status" value="1"/>
</dbReference>
<dbReference type="InterPro" id="IPR000911">
    <property type="entry name" value="Ribosomal_uL11"/>
</dbReference>
<dbReference type="InterPro" id="IPR006519">
    <property type="entry name" value="Ribosomal_uL11_bac-typ"/>
</dbReference>
<dbReference type="InterPro" id="IPR020783">
    <property type="entry name" value="Ribosomal_uL11_C"/>
</dbReference>
<dbReference type="InterPro" id="IPR036769">
    <property type="entry name" value="Ribosomal_uL11_C_sf"/>
</dbReference>
<dbReference type="InterPro" id="IPR020785">
    <property type="entry name" value="Ribosomal_uL11_CS"/>
</dbReference>
<dbReference type="InterPro" id="IPR020784">
    <property type="entry name" value="Ribosomal_uL11_N"/>
</dbReference>
<dbReference type="InterPro" id="IPR036796">
    <property type="entry name" value="Ribosomal_uL11_N_sf"/>
</dbReference>
<dbReference type="NCBIfam" id="TIGR01632">
    <property type="entry name" value="L11_bact"/>
    <property type="match status" value="1"/>
</dbReference>
<dbReference type="PANTHER" id="PTHR11661">
    <property type="entry name" value="60S RIBOSOMAL PROTEIN L12"/>
    <property type="match status" value="1"/>
</dbReference>
<dbReference type="PANTHER" id="PTHR11661:SF1">
    <property type="entry name" value="LARGE RIBOSOMAL SUBUNIT PROTEIN UL11M"/>
    <property type="match status" value="1"/>
</dbReference>
<dbReference type="Pfam" id="PF00298">
    <property type="entry name" value="Ribosomal_L11"/>
    <property type="match status" value="1"/>
</dbReference>
<dbReference type="Pfam" id="PF03946">
    <property type="entry name" value="Ribosomal_L11_N"/>
    <property type="match status" value="1"/>
</dbReference>
<dbReference type="SMART" id="SM00649">
    <property type="entry name" value="RL11"/>
    <property type="match status" value="1"/>
</dbReference>
<dbReference type="SUPFAM" id="SSF54747">
    <property type="entry name" value="Ribosomal L11/L12e N-terminal domain"/>
    <property type="match status" value="1"/>
</dbReference>
<dbReference type="SUPFAM" id="SSF46906">
    <property type="entry name" value="Ribosomal protein L11, C-terminal domain"/>
    <property type="match status" value="1"/>
</dbReference>
<dbReference type="PROSITE" id="PS00359">
    <property type="entry name" value="RIBOSOMAL_L11"/>
    <property type="match status" value="1"/>
</dbReference>
<organism>
    <name type="scientific">Nautilia profundicola (strain ATCC BAA-1463 / DSM 18972 / AmH)</name>
    <dbReference type="NCBI Taxonomy" id="598659"/>
    <lineage>
        <taxon>Bacteria</taxon>
        <taxon>Pseudomonadati</taxon>
        <taxon>Campylobacterota</taxon>
        <taxon>Epsilonproteobacteria</taxon>
        <taxon>Nautiliales</taxon>
        <taxon>Nautiliaceae</taxon>
        <taxon>Nautilia</taxon>
    </lineage>
</organism>
<sequence>MAKKVVEVLKLQIPAGKANPSPPVGPALGQRGINIMEFCKAFNEKTKDMMGFTIPVEITVFSDRSFTFITKQPPATDLLKKAAGIQKGSSNPLKDKVGKITKAQLKEVAEKKLPDLNTDDIEQAMKILAGSARSMGIEIVD</sequence>
<accession>B9L7J2</accession>
<gene>
    <name evidence="1" type="primary">rplK</name>
    <name type="ordered locus">NAMH_0176</name>
</gene>
<protein>
    <recommendedName>
        <fullName evidence="1">Large ribosomal subunit protein uL11</fullName>
    </recommendedName>
    <alternativeName>
        <fullName evidence="2">50S ribosomal protein L11</fullName>
    </alternativeName>
</protein>
<reference key="1">
    <citation type="journal article" date="2009" name="PLoS Genet.">
        <title>Adaptations to submarine hydrothermal environments exemplified by the genome of Nautilia profundicola.</title>
        <authorList>
            <person name="Campbell B.J."/>
            <person name="Smith J.L."/>
            <person name="Hanson T.E."/>
            <person name="Klotz M.G."/>
            <person name="Stein L.Y."/>
            <person name="Lee C.K."/>
            <person name="Wu D."/>
            <person name="Robinson J.M."/>
            <person name="Khouri H.M."/>
            <person name="Eisen J.A."/>
            <person name="Cary S.C."/>
        </authorList>
    </citation>
    <scope>NUCLEOTIDE SEQUENCE [LARGE SCALE GENOMIC DNA]</scope>
    <source>
        <strain>ATCC BAA-1463 / DSM 18972 / AmH</strain>
    </source>
</reference>
<proteinExistence type="inferred from homology"/>
<keyword id="KW-0488">Methylation</keyword>
<keyword id="KW-0687">Ribonucleoprotein</keyword>
<keyword id="KW-0689">Ribosomal protein</keyword>
<keyword id="KW-0694">RNA-binding</keyword>
<keyword id="KW-0699">rRNA-binding</keyword>
<comment type="function">
    <text evidence="1">Forms part of the ribosomal stalk which helps the ribosome interact with GTP-bound translation factors.</text>
</comment>
<comment type="subunit">
    <text evidence="1">Part of the ribosomal stalk of the 50S ribosomal subunit. Interacts with L10 and the large rRNA to form the base of the stalk. L10 forms an elongated spine to which L12 dimers bind in a sequential fashion forming a multimeric L10(L12)X complex.</text>
</comment>
<comment type="PTM">
    <text evidence="1">One or more lysine residues are methylated.</text>
</comment>
<comment type="similarity">
    <text evidence="1">Belongs to the universal ribosomal protein uL11 family.</text>
</comment>
<evidence type="ECO:0000255" key="1">
    <source>
        <dbReference type="HAMAP-Rule" id="MF_00736"/>
    </source>
</evidence>
<evidence type="ECO:0000305" key="2"/>
<name>RL11_NAUPA</name>
<feature type="chain" id="PRO_1000195679" description="Large ribosomal subunit protein uL11">
    <location>
        <begin position="1"/>
        <end position="141"/>
    </location>
</feature>